<reference key="1">
    <citation type="submission" date="2007-11" db="EMBL/GenBank/DDBJ databases">
        <authorList>
            <consortium name="The Salmonella enterica serovar Arizonae Genome Sequencing Project"/>
            <person name="McClelland M."/>
            <person name="Sanderson E.K."/>
            <person name="Porwollik S."/>
            <person name="Spieth J."/>
            <person name="Clifton W.S."/>
            <person name="Fulton R."/>
            <person name="Chunyan W."/>
            <person name="Wollam A."/>
            <person name="Shah N."/>
            <person name="Pepin K."/>
            <person name="Bhonagiri V."/>
            <person name="Nash W."/>
            <person name="Johnson M."/>
            <person name="Thiruvilangam P."/>
            <person name="Wilson R."/>
        </authorList>
    </citation>
    <scope>NUCLEOTIDE SEQUENCE [LARGE SCALE GENOMIC DNA]</scope>
    <source>
        <strain>ATCC BAA-731 / CDC346-86 / RSK2980</strain>
    </source>
</reference>
<proteinExistence type="inferred from homology"/>
<feature type="chain" id="PRO_1000086683" description="Large ribosomal subunit protein uL18">
    <location>
        <begin position="1"/>
        <end position="117"/>
    </location>
</feature>
<dbReference type="EMBL" id="CP000880">
    <property type="protein sequence ID" value="ABX23994.1"/>
    <property type="molecule type" value="Genomic_DNA"/>
</dbReference>
<dbReference type="SMR" id="A9MN64"/>
<dbReference type="STRING" id="41514.SARI_04205"/>
<dbReference type="KEGG" id="ses:SARI_04205"/>
<dbReference type="HOGENOM" id="CLU_098841_0_1_6"/>
<dbReference type="Proteomes" id="UP000002084">
    <property type="component" value="Chromosome"/>
</dbReference>
<dbReference type="GO" id="GO:0022625">
    <property type="term" value="C:cytosolic large ribosomal subunit"/>
    <property type="evidence" value="ECO:0007669"/>
    <property type="project" value="TreeGrafter"/>
</dbReference>
<dbReference type="GO" id="GO:0008097">
    <property type="term" value="F:5S rRNA binding"/>
    <property type="evidence" value="ECO:0007669"/>
    <property type="project" value="TreeGrafter"/>
</dbReference>
<dbReference type="GO" id="GO:0003735">
    <property type="term" value="F:structural constituent of ribosome"/>
    <property type="evidence" value="ECO:0007669"/>
    <property type="project" value="InterPro"/>
</dbReference>
<dbReference type="GO" id="GO:0006412">
    <property type="term" value="P:translation"/>
    <property type="evidence" value="ECO:0007669"/>
    <property type="project" value="UniProtKB-UniRule"/>
</dbReference>
<dbReference type="CDD" id="cd00432">
    <property type="entry name" value="Ribosomal_L18_L5e"/>
    <property type="match status" value="1"/>
</dbReference>
<dbReference type="FunFam" id="3.30.420.100:FF:000001">
    <property type="entry name" value="50S ribosomal protein L18"/>
    <property type="match status" value="1"/>
</dbReference>
<dbReference type="Gene3D" id="3.30.420.100">
    <property type="match status" value="1"/>
</dbReference>
<dbReference type="HAMAP" id="MF_01337_B">
    <property type="entry name" value="Ribosomal_uL18_B"/>
    <property type="match status" value="1"/>
</dbReference>
<dbReference type="InterPro" id="IPR004389">
    <property type="entry name" value="Ribosomal_uL18_bac-type"/>
</dbReference>
<dbReference type="InterPro" id="IPR005484">
    <property type="entry name" value="Ribosomal_uL18_bac/euk"/>
</dbReference>
<dbReference type="NCBIfam" id="TIGR00060">
    <property type="entry name" value="L18_bact"/>
    <property type="match status" value="1"/>
</dbReference>
<dbReference type="PANTHER" id="PTHR12899">
    <property type="entry name" value="39S RIBOSOMAL PROTEIN L18, MITOCHONDRIAL"/>
    <property type="match status" value="1"/>
</dbReference>
<dbReference type="PANTHER" id="PTHR12899:SF3">
    <property type="entry name" value="LARGE RIBOSOMAL SUBUNIT PROTEIN UL18M"/>
    <property type="match status" value="1"/>
</dbReference>
<dbReference type="Pfam" id="PF00861">
    <property type="entry name" value="Ribosomal_L18p"/>
    <property type="match status" value="1"/>
</dbReference>
<dbReference type="SUPFAM" id="SSF53137">
    <property type="entry name" value="Translational machinery components"/>
    <property type="match status" value="1"/>
</dbReference>
<protein>
    <recommendedName>
        <fullName evidence="1">Large ribosomal subunit protein uL18</fullName>
    </recommendedName>
    <alternativeName>
        <fullName evidence="2">50S ribosomal protein L18</fullName>
    </alternativeName>
</protein>
<keyword id="KW-1185">Reference proteome</keyword>
<keyword id="KW-0687">Ribonucleoprotein</keyword>
<keyword id="KW-0689">Ribosomal protein</keyword>
<keyword id="KW-0694">RNA-binding</keyword>
<keyword id="KW-0699">rRNA-binding</keyword>
<organism>
    <name type="scientific">Salmonella arizonae (strain ATCC BAA-731 / CDC346-86 / RSK2980)</name>
    <dbReference type="NCBI Taxonomy" id="41514"/>
    <lineage>
        <taxon>Bacteria</taxon>
        <taxon>Pseudomonadati</taxon>
        <taxon>Pseudomonadota</taxon>
        <taxon>Gammaproteobacteria</taxon>
        <taxon>Enterobacterales</taxon>
        <taxon>Enterobacteriaceae</taxon>
        <taxon>Salmonella</taxon>
    </lineage>
</organism>
<comment type="function">
    <text evidence="1">This is one of the proteins that bind and probably mediate the attachment of the 5S RNA into the large ribosomal subunit, where it forms part of the central protuberance.</text>
</comment>
<comment type="subunit">
    <text evidence="1">Part of the 50S ribosomal subunit; part of the 5S rRNA/L5/L18/L25 subcomplex. Contacts the 5S and 23S rRNAs.</text>
</comment>
<comment type="similarity">
    <text evidence="1">Belongs to the universal ribosomal protein uL18 family.</text>
</comment>
<sequence>MDKKSARIRRATRARRKLKELGATRLVVHRTPRHIYAQVIAPNGSEVLVAASTVEKAIAEQLKYTGNKDAAAAVGKAVAERALEKGIKDVSFDRSGFQYHGRVQALADAAREAGLQF</sequence>
<name>RL18_SALAR</name>
<gene>
    <name evidence="1" type="primary">rplR</name>
    <name type="ordered locus">SARI_04205</name>
</gene>
<evidence type="ECO:0000255" key="1">
    <source>
        <dbReference type="HAMAP-Rule" id="MF_01337"/>
    </source>
</evidence>
<evidence type="ECO:0000305" key="2"/>
<accession>A9MN64</accession>